<organism>
    <name type="scientific">Epifagus virginiana</name>
    <name type="common">Beechdrops</name>
    <name type="synonym">Orobanche virginiana</name>
    <dbReference type="NCBI Taxonomy" id="4177"/>
    <lineage>
        <taxon>Eukaryota</taxon>
        <taxon>Viridiplantae</taxon>
        <taxon>Streptophyta</taxon>
        <taxon>Embryophyta</taxon>
        <taxon>Tracheophyta</taxon>
        <taxon>Spermatophyta</taxon>
        <taxon>Magnoliopsida</taxon>
        <taxon>eudicotyledons</taxon>
        <taxon>Gunneridae</taxon>
        <taxon>Pentapetalae</taxon>
        <taxon>asterids</taxon>
        <taxon>lamiids</taxon>
        <taxon>Lamiales</taxon>
        <taxon>Orobanchaceae</taxon>
        <taxon>Orobancheae</taxon>
        <taxon>Epifagus</taxon>
    </lineage>
</organism>
<proteinExistence type="inferred from homology"/>
<gene>
    <name evidence="1" type="primary">rps11</name>
</gene>
<reference key="1">
    <citation type="journal article" date="1992" name="Proc. Natl. Acad. Sci. U.S.A.">
        <title>Function and evolution of a minimal plastid genome from a nonphotosynthetic parasitic plant.</title>
        <authorList>
            <person name="Wolfe K.H."/>
            <person name="Morden C.W."/>
            <person name="Palmer J.D."/>
        </authorList>
    </citation>
    <scope>NUCLEOTIDE SEQUENCE [LARGE SCALE GENOMIC DNA]</scope>
</reference>
<reference key="2">
    <citation type="journal article" date="1992" name="J. Mol. Evol.">
        <title>Rapid evolution of the plastid translational apparatus in a nonphotosynthetic plant: loss or accelerated sequence evolution of tRNA and ribosomal protein genes.</title>
        <authorList>
            <person name="Wolfe K.H."/>
            <person name="Morden C.W."/>
            <person name="Ems S.C."/>
            <person name="Palmer J.D."/>
        </authorList>
    </citation>
    <scope>NUCLEOTIDE SEQUENCE [GENOMIC DNA]</scope>
</reference>
<dbReference type="EMBL" id="M81884">
    <property type="protein sequence ID" value="AAA65859.1"/>
    <property type="molecule type" value="Genomic_DNA"/>
</dbReference>
<dbReference type="PIR" id="S78390">
    <property type="entry name" value="S78390"/>
</dbReference>
<dbReference type="RefSeq" id="NP_054385.1">
    <property type="nucleotide sequence ID" value="NC_001568.1"/>
</dbReference>
<dbReference type="SMR" id="P30059"/>
<dbReference type="GeneID" id="801416"/>
<dbReference type="GO" id="GO:0009536">
    <property type="term" value="C:plastid"/>
    <property type="evidence" value="ECO:0007669"/>
    <property type="project" value="UniProtKB-SubCell"/>
</dbReference>
<dbReference type="GO" id="GO:1990904">
    <property type="term" value="C:ribonucleoprotein complex"/>
    <property type="evidence" value="ECO:0007669"/>
    <property type="project" value="UniProtKB-KW"/>
</dbReference>
<dbReference type="GO" id="GO:0005840">
    <property type="term" value="C:ribosome"/>
    <property type="evidence" value="ECO:0007669"/>
    <property type="project" value="UniProtKB-KW"/>
</dbReference>
<dbReference type="GO" id="GO:0019843">
    <property type="term" value="F:rRNA binding"/>
    <property type="evidence" value="ECO:0007669"/>
    <property type="project" value="UniProtKB-KW"/>
</dbReference>
<dbReference type="GO" id="GO:0003735">
    <property type="term" value="F:structural constituent of ribosome"/>
    <property type="evidence" value="ECO:0007669"/>
    <property type="project" value="InterPro"/>
</dbReference>
<dbReference type="GO" id="GO:0006412">
    <property type="term" value="P:translation"/>
    <property type="evidence" value="ECO:0007669"/>
    <property type="project" value="InterPro"/>
</dbReference>
<dbReference type="Gene3D" id="3.30.420.80">
    <property type="entry name" value="Ribosomal protein S11"/>
    <property type="match status" value="1"/>
</dbReference>
<dbReference type="HAMAP" id="MF_01310">
    <property type="entry name" value="Ribosomal_uS11"/>
    <property type="match status" value="1"/>
</dbReference>
<dbReference type="InterPro" id="IPR001971">
    <property type="entry name" value="Ribosomal_uS11"/>
</dbReference>
<dbReference type="InterPro" id="IPR018102">
    <property type="entry name" value="Ribosomal_uS11_CS"/>
</dbReference>
<dbReference type="InterPro" id="IPR036967">
    <property type="entry name" value="Ribosomal_uS11_sf"/>
</dbReference>
<dbReference type="NCBIfam" id="NF003698">
    <property type="entry name" value="PRK05309.1"/>
    <property type="match status" value="1"/>
</dbReference>
<dbReference type="PANTHER" id="PTHR11759">
    <property type="entry name" value="40S RIBOSOMAL PROTEIN S14/30S RIBOSOMAL PROTEIN S11"/>
    <property type="match status" value="1"/>
</dbReference>
<dbReference type="Pfam" id="PF00411">
    <property type="entry name" value="Ribosomal_S11"/>
    <property type="match status" value="1"/>
</dbReference>
<dbReference type="PIRSF" id="PIRSF002131">
    <property type="entry name" value="Ribosomal_S11"/>
    <property type="match status" value="1"/>
</dbReference>
<dbReference type="SUPFAM" id="SSF53137">
    <property type="entry name" value="Translational machinery components"/>
    <property type="match status" value="1"/>
</dbReference>
<dbReference type="PROSITE" id="PS00054">
    <property type="entry name" value="RIBOSOMAL_S11"/>
    <property type="match status" value="1"/>
</dbReference>
<name>RR11_EPIVI</name>
<comment type="subunit">
    <text evidence="1">Part of the 30S ribosomal subunit.</text>
</comment>
<comment type="subcellular location">
    <subcellularLocation>
        <location>Plastid</location>
    </subcellularLocation>
</comment>
<comment type="similarity">
    <text evidence="1">Belongs to the universal ribosomal protein uS11 family.</text>
</comment>
<feature type="chain" id="PRO_0000123300" description="Small ribosomal subunit protein uS11c">
    <location>
        <begin position="1"/>
        <end position="136"/>
    </location>
</feature>
<accession>P30059</accession>
<protein>
    <recommendedName>
        <fullName evidence="2">Small ribosomal subunit protein uS11c</fullName>
    </recommendedName>
    <alternativeName>
        <fullName>Plastid 30S ribosomal protein S11</fullName>
    </alternativeName>
</protein>
<keyword id="KW-0934">Plastid</keyword>
<keyword id="KW-0687">Ribonucleoprotein</keyword>
<keyword id="KW-0689">Ribosomal protein</keyword>
<keyword id="KW-0694">RNA-binding</keyword>
<keyword id="KW-0699">rRNA-binding</keyword>
<geneLocation type="non-photosynthetic plastid"/>
<sequence length="136" mass="14650">MAKAIPITGSRRNVHVGSRKSSFRIQKGVIHVQTSFNNTIVAVTDIKGRVVSWSSAGTCGFKGTRRGTSFAAQIAATNAIRIVQGMQRAEVMIKGPGIGRDAVLRAIRGSGVLLTFVRDVTPMPHNGCRPPKKRRV</sequence>
<evidence type="ECO:0000255" key="1">
    <source>
        <dbReference type="HAMAP-Rule" id="MF_01310"/>
    </source>
</evidence>
<evidence type="ECO:0000305" key="2"/>